<evidence type="ECO:0000255" key="1">
    <source>
        <dbReference type="PROSITE-ProRule" id="PRU00798"/>
    </source>
</evidence>
<protein>
    <recommendedName>
        <fullName>Ovomucoid</fullName>
    </recommendedName>
</protein>
<dbReference type="PIR" id="H31440">
    <property type="entry name" value="H31440"/>
</dbReference>
<dbReference type="SMR" id="P68389"/>
<dbReference type="Allergome" id="2109">
    <property type="allergen name" value="Ans a 1"/>
</dbReference>
<dbReference type="GO" id="GO:0005576">
    <property type="term" value="C:extracellular region"/>
    <property type="evidence" value="ECO:0007669"/>
    <property type="project" value="UniProtKB-SubCell"/>
</dbReference>
<dbReference type="GO" id="GO:0004867">
    <property type="term" value="F:serine-type endopeptidase inhibitor activity"/>
    <property type="evidence" value="ECO:0007669"/>
    <property type="project" value="UniProtKB-KW"/>
</dbReference>
<dbReference type="CDD" id="cd00104">
    <property type="entry name" value="KAZAL_FS"/>
    <property type="match status" value="1"/>
</dbReference>
<dbReference type="FunFam" id="3.30.60.30:FF:000037">
    <property type="entry name" value="Ovomucoid"/>
    <property type="match status" value="1"/>
</dbReference>
<dbReference type="Gene3D" id="3.30.60.30">
    <property type="match status" value="1"/>
</dbReference>
<dbReference type="InterPro" id="IPR051597">
    <property type="entry name" value="Bifunctional_prot_inhibitor"/>
</dbReference>
<dbReference type="InterPro" id="IPR002350">
    <property type="entry name" value="Kazal_dom"/>
</dbReference>
<dbReference type="InterPro" id="IPR036058">
    <property type="entry name" value="Kazal_dom_sf"/>
</dbReference>
<dbReference type="InterPro" id="IPR001239">
    <property type="entry name" value="Prot_inh_Kazal-m"/>
</dbReference>
<dbReference type="PANTHER" id="PTHR47729:SF1">
    <property type="entry name" value="OVOMUCOID-LIKE-RELATED"/>
    <property type="match status" value="1"/>
</dbReference>
<dbReference type="PANTHER" id="PTHR47729">
    <property type="entry name" value="SERINE PEPTIDASE INHIBITOR, KAZAL TYPE 2, TANDEM DUPLICATE 1-RELATED"/>
    <property type="match status" value="1"/>
</dbReference>
<dbReference type="Pfam" id="PF00050">
    <property type="entry name" value="Kazal_1"/>
    <property type="match status" value="1"/>
</dbReference>
<dbReference type="PRINTS" id="PR00290">
    <property type="entry name" value="KAZALINHBTR"/>
</dbReference>
<dbReference type="SMART" id="SM00280">
    <property type="entry name" value="KAZAL"/>
    <property type="match status" value="1"/>
</dbReference>
<dbReference type="SUPFAM" id="SSF100895">
    <property type="entry name" value="Kazal-type serine protease inhibitors"/>
    <property type="match status" value="1"/>
</dbReference>
<dbReference type="PROSITE" id="PS00282">
    <property type="entry name" value="KAZAL_1"/>
    <property type="match status" value="1"/>
</dbReference>
<dbReference type="PROSITE" id="PS51465">
    <property type="entry name" value="KAZAL_2"/>
    <property type="match status" value="1"/>
</dbReference>
<sequence length="54" mass="5842">VATVDCSDYPKPACTVEYMPLCGSDNKTYDNKCNFCNAVVDSNGTLTLSHFGKC</sequence>
<keyword id="KW-0903">Direct protein sequencing</keyword>
<keyword id="KW-1015">Disulfide bond</keyword>
<keyword id="KW-0325">Glycoprotein</keyword>
<keyword id="KW-0646">Protease inhibitor</keyword>
<keyword id="KW-0677">Repeat</keyword>
<keyword id="KW-0964">Secreted</keyword>
<keyword id="KW-0722">Serine protease inhibitor</keyword>
<reference key="1">
    <citation type="journal article" date="1987" name="Biochemistry">
        <title>Ovomucoid third domains from 100 avian species: isolation, sequences, and hypervariability of enzyme-inhibitor contact residues.</title>
        <authorList>
            <person name="Laskowski M. Jr."/>
            <person name="Kato I."/>
            <person name="Ardelt W."/>
            <person name="Cook J."/>
            <person name="Denton A."/>
            <person name="Empie M.W."/>
            <person name="Kohr W.J."/>
            <person name="Park S.J."/>
            <person name="Parks K."/>
            <person name="Schatzley B.L."/>
            <person name="Schoenberger O.L."/>
            <person name="Tashiro M."/>
            <person name="Vichot G."/>
            <person name="Whatley H.E."/>
            <person name="Wieczorek A."/>
            <person name="Wieczorek M."/>
        </authorList>
    </citation>
    <scope>PROTEIN SEQUENCE</scope>
</reference>
<feature type="chain" id="PRO_0000073058" description="Ovomucoid">
    <location>
        <begin position="1" status="less than"/>
        <end position="54" status="greater than"/>
    </location>
</feature>
<feature type="domain" description="Kazal-like" evidence="1">
    <location>
        <begin position="4"/>
        <end position="54"/>
    </location>
</feature>
<feature type="site" description="Reactive bond 3">
    <location>
        <begin position="16"/>
        <end position="17"/>
    </location>
</feature>
<feature type="glycosylation site" description="N-linked (GlcNAc...) asparagine">
    <location>
        <position position="43"/>
    </location>
</feature>
<feature type="disulfide bond">
    <location>
        <begin position="6"/>
        <end position="36"/>
    </location>
</feature>
<feature type="disulfide bond">
    <location>
        <begin position="14"/>
        <end position="33"/>
    </location>
</feature>
<feature type="disulfide bond">
    <location>
        <begin position="22"/>
        <end position="54"/>
    </location>
</feature>
<feature type="non-terminal residue">
    <location>
        <position position="1"/>
    </location>
</feature>
<feature type="non-terminal residue">
    <location>
        <position position="54"/>
    </location>
</feature>
<accession>P68389</accession>
<accession>P05573</accession>
<proteinExistence type="evidence at protein level"/>
<name>IOVO_ANSAN</name>
<organism>
    <name type="scientific">Anser anser anser</name>
    <name type="common">Western greylag goose</name>
    <dbReference type="NCBI Taxonomy" id="8844"/>
    <lineage>
        <taxon>Eukaryota</taxon>
        <taxon>Metazoa</taxon>
        <taxon>Chordata</taxon>
        <taxon>Craniata</taxon>
        <taxon>Vertebrata</taxon>
        <taxon>Euteleostomi</taxon>
        <taxon>Archelosauria</taxon>
        <taxon>Archosauria</taxon>
        <taxon>Dinosauria</taxon>
        <taxon>Saurischia</taxon>
        <taxon>Theropoda</taxon>
        <taxon>Coelurosauria</taxon>
        <taxon>Aves</taxon>
        <taxon>Neognathae</taxon>
        <taxon>Galloanserae</taxon>
        <taxon>Anseriformes</taxon>
        <taxon>Anatidae</taxon>
        <taxon>Anserinae</taxon>
        <taxon>Anser</taxon>
    </lineage>
</organism>
<comment type="subcellular location">
    <subcellularLocation>
        <location>Secreted</location>
    </subcellularLocation>
</comment>
<comment type="domain">
    <text>Avian ovomucoid consists of three homologous, tandem Kazal family inhibitory domains.</text>
</comment>